<accession>A7WLI0</accession>
<comment type="function">
    <text evidence="1">Ubiquitin-like protein which can be covalently attached to target lysines as a monomer. Does not seem to be involved in protein degradation and may modulate protein subcellular localization, stability or activity. Upon oxidative stress, conjugates to various anti-oxidant enzymes, chaperones, and stress defense proteins. May also conjugate to NFKBIA, TFAP2A and FOS, negatively regulating their transcriptional activity, and to NR3C1, positively regulating its transcriptional activity. Covalent attachment to its substrates requires prior activation by the E1 complex SAE1-SAE2 and linkage to the E2 enzyme UBE2I (By similarity).</text>
</comment>
<comment type="subunit">
    <text evidence="1">Interacts with SAE2. Covalently attached to a number of proteins (By similarity).</text>
</comment>
<comment type="similarity">
    <text evidence="3">Belongs to the ubiquitin family. SUMO subfamily.</text>
</comment>
<name>SUMO4_PIG</name>
<organism>
    <name type="scientific">Sus scrofa</name>
    <name type="common">Pig</name>
    <dbReference type="NCBI Taxonomy" id="9823"/>
    <lineage>
        <taxon>Eukaryota</taxon>
        <taxon>Metazoa</taxon>
        <taxon>Chordata</taxon>
        <taxon>Craniata</taxon>
        <taxon>Vertebrata</taxon>
        <taxon>Euteleostomi</taxon>
        <taxon>Mammalia</taxon>
        <taxon>Eutheria</taxon>
        <taxon>Laurasiatheria</taxon>
        <taxon>Artiodactyla</taxon>
        <taxon>Suina</taxon>
        <taxon>Suidae</taxon>
        <taxon>Sus</taxon>
    </lineage>
</organism>
<sequence>MADEKPKEGVKTENNDHINLKVAGQDGSVAQFKIRRHTPLSKLMKAYCERQGLSIRQIRFRVDGQPINETHTPAQLELEDEDTIDVLQQQTGGVY</sequence>
<feature type="chain" id="PRO_0000311797" description="Small ubiquitin-related modifier 4">
    <location>
        <begin position="1"/>
        <end position="93"/>
    </location>
</feature>
<feature type="propeptide" id="PRO_0000311798" evidence="1">
    <location>
        <begin position="94"/>
        <end position="95"/>
    </location>
</feature>
<feature type="domain" description="Ubiquitin-like" evidence="2">
    <location>
        <begin position="17"/>
        <end position="95"/>
    </location>
</feature>
<feature type="cross-link" description="Glycyl lysine isopeptide (Gly-Lys) (interchain with K-? in acceptor proteins)">
    <location>
        <position position="93"/>
    </location>
</feature>
<reference key="1">
    <citation type="submission" date="2006-08" db="EMBL/GenBank/DDBJ databases">
        <title>Molecular cloning and expression analysis of porcine SUMO genes.</title>
        <authorList>
            <person name="Chun T."/>
            <person name="Lee J.Y."/>
        </authorList>
    </citation>
    <scope>NUCLEOTIDE SEQUENCE [MRNA]</scope>
</reference>
<keyword id="KW-1017">Isopeptide bond</keyword>
<keyword id="KW-1185">Reference proteome</keyword>
<keyword id="KW-0833">Ubl conjugation pathway</keyword>
<protein>
    <recommendedName>
        <fullName>Small ubiquitin-related modifier 4</fullName>
        <shortName>SUMO-4</shortName>
    </recommendedName>
</protein>
<dbReference type="EMBL" id="AM397627">
    <property type="protein sequence ID" value="CAL37098.1"/>
    <property type="molecule type" value="mRNA"/>
</dbReference>
<dbReference type="RefSeq" id="NP_001106147.1">
    <property type="nucleotide sequence ID" value="NM_001112677.1"/>
</dbReference>
<dbReference type="SMR" id="A7WLI0"/>
<dbReference type="FunCoup" id="A7WLI0">
    <property type="interactions" value="259"/>
</dbReference>
<dbReference type="PeptideAtlas" id="A7WLI0"/>
<dbReference type="GeneID" id="100127140"/>
<dbReference type="KEGG" id="ssc:100127140"/>
<dbReference type="CTD" id="387082"/>
<dbReference type="InParanoid" id="A7WLI0"/>
<dbReference type="OrthoDB" id="9925208at2759"/>
<dbReference type="Proteomes" id="UP000008227">
    <property type="component" value="Unplaced"/>
</dbReference>
<dbReference type="Proteomes" id="UP000314985">
    <property type="component" value="Unplaced"/>
</dbReference>
<dbReference type="Proteomes" id="UP000694570">
    <property type="component" value="Unplaced"/>
</dbReference>
<dbReference type="Proteomes" id="UP000694571">
    <property type="component" value="Unplaced"/>
</dbReference>
<dbReference type="Proteomes" id="UP000694720">
    <property type="component" value="Unplaced"/>
</dbReference>
<dbReference type="Proteomes" id="UP000694722">
    <property type="component" value="Unplaced"/>
</dbReference>
<dbReference type="Proteomes" id="UP000694723">
    <property type="component" value="Unplaced"/>
</dbReference>
<dbReference type="Proteomes" id="UP000694724">
    <property type="component" value="Unplaced"/>
</dbReference>
<dbReference type="Proteomes" id="UP000694725">
    <property type="component" value="Unplaced"/>
</dbReference>
<dbReference type="Proteomes" id="UP000694726">
    <property type="component" value="Unplaced"/>
</dbReference>
<dbReference type="Proteomes" id="UP000694727">
    <property type="component" value="Unplaced"/>
</dbReference>
<dbReference type="Proteomes" id="UP000694728">
    <property type="component" value="Unplaced"/>
</dbReference>
<dbReference type="GO" id="GO:0005634">
    <property type="term" value="C:nucleus"/>
    <property type="evidence" value="ECO:0000318"/>
    <property type="project" value="GO_Central"/>
</dbReference>
<dbReference type="GO" id="GO:0031386">
    <property type="term" value="F:protein tag activity"/>
    <property type="evidence" value="ECO:0000318"/>
    <property type="project" value="GO_Central"/>
</dbReference>
<dbReference type="GO" id="GO:0044389">
    <property type="term" value="F:ubiquitin-like protein ligase binding"/>
    <property type="evidence" value="ECO:0000318"/>
    <property type="project" value="GO_Central"/>
</dbReference>
<dbReference type="GO" id="GO:0016925">
    <property type="term" value="P:protein sumoylation"/>
    <property type="evidence" value="ECO:0000318"/>
    <property type="project" value="GO_Central"/>
</dbReference>
<dbReference type="CDD" id="cd16115">
    <property type="entry name" value="Ubl_SUMO2_3_4"/>
    <property type="match status" value="1"/>
</dbReference>
<dbReference type="FunFam" id="3.10.20.90:FF:000482">
    <property type="entry name" value="Small ubiquitin-related modifier 2"/>
    <property type="match status" value="1"/>
</dbReference>
<dbReference type="Gene3D" id="3.10.20.90">
    <property type="entry name" value="Phosphatidylinositol 3-kinase Catalytic Subunit, Chain A, domain 1"/>
    <property type="match status" value="1"/>
</dbReference>
<dbReference type="InterPro" id="IPR022617">
    <property type="entry name" value="Rad60/SUMO-like_dom"/>
</dbReference>
<dbReference type="InterPro" id="IPR000626">
    <property type="entry name" value="Ubiquitin-like_dom"/>
</dbReference>
<dbReference type="InterPro" id="IPR029071">
    <property type="entry name" value="Ubiquitin-like_domsf"/>
</dbReference>
<dbReference type="PANTHER" id="PTHR10562">
    <property type="entry name" value="SMALL UBIQUITIN-RELATED MODIFIER"/>
    <property type="match status" value="1"/>
</dbReference>
<dbReference type="Pfam" id="PF11976">
    <property type="entry name" value="Rad60-SLD"/>
    <property type="match status" value="1"/>
</dbReference>
<dbReference type="SMART" id="SM00213">
    <property type="entry name" value="UBQ"/>
    <property type="match status" value="1"/>
</dbReference>
<dbReference type="SUPFAM" id="SSF54236">
    <property type="entry name" value="Ubiquitin-like"/>
    <property type="match status" value="1"/>
</dbReference>
<dbReference type="PROSITE" id="PS50053">
    <property type="entry name" value="UBIQUITIN_2"/>
    <property type="match status" value="1"/>
</dbReference>
<evidence type="ECO:0000250" key="1"/>
<evidence type="ECO:0000255" key="2">
    <source>
        <dbReference type="PROSITE-ProRule" id="PRU00214"/>
    </source>
</evidence>
<evidence type="ECO:0000305" key="3"/>
<proteinExistence type="evidence at protein level"/>
<gene>
    <name type="primary">SUMO4</name>
</gene>